<organism>
    <name type="scientific">Rattus norvegicus</name>
    <name type="common">Rat</name>
    <dbReference type="NCBI Taxonomy" id="10116"/>
    <lineage>
        <taxon>Eukaryota</taxon>
        <taxon>Metazoa</taxon>
        <taxon>Chordata</taxon>
        <taxon>Craniata</taxon>
        <taxon>Vertebrata</taxon>
        <taxon>Euteleostomi</taxon>
        <taxon>Mammalia</taxon>
        <taxon>Eutheria</taxon>
        <taxon>Euarchontoglires</taxon>
        <taxon>Glires</taxon>
        <taxon>Rodentia</taxon>
        <taxon>Myomorpha</taxon>
        <taxon>Muroidea</taxon>
        <taxon>Muridae</taxon>
        <taxon>Murinae</taxon>
        <taxon>Rattus</taxon>
    </lineage>
</organism>
<gene>
    <name type="primary">Cdh7</name>
    <name type="synonym">Cad7</name>
</gene>
<reference key="1">
    <citation type="submission" date="2003-09" db="EMBL/GenBank/DDBJ databases">
        <title>Expressions of rat cadherin-7 and 20 in the developing nervous system.</title>
        <authorList>
            <person name="Takahashi M."/>
            <person name="Osumi N."/>
        </authorList>
    </citation>
    <scope>NUCLEOTIDE SEQUENCE [MRNA]</scope>
    <source>
        <strain>Sprague-Dawley</strain>
    </source>
</reference>
<keyword id="KW-0106">Calcium</keyword>
<keyword id="KW-0130">Cell adhesion</keyword>
<keyword id="KW-1003">Cell membrane</keyword>
<keyword id="KW-0165">Cleavage on pair of basic residues</keyword>
<keyword id="KW-0325">Glycoprotein</keyword>
<keyword id="KW-0472">Membrane</keyword>
<keyword id="KW-0479">Metal-binding</keyword>
<keyword id="KW-1185">Reference proteome</keyword>
<keyword id="KW-0677">Repeat</keyword>
<keyword id="KW-0732">Signal</keyword>
<keyword id="KW-0812">Transmembrane</keyword>
<keyword id="KW-1133">Transmembrane helix</keyword>
<comment type="function">
    <text evidence="1">Cadherins are calcium-dependent cell adhesion proteins. They preferentially interact with themselves in a homophilic manner in connecting cells; cadherins may thus contribute to the sorting of heterogeneous cell types (By similarity).</text>
</comment>
<comment type="subcellular location">
    <subcellularLocation>
        <location evidence="1">Cell membrane</location>
        <topology evidence="1">Single-pass type I membrane protein</topology>
    </subcellularLocation>
</comment>
<comment type="domain">
    <text evidence="1">Three calcium ions are usually bound at the interface of each cadherin domain and rigidify the connections, imparting a strong curvature to the full-length ectodomain.</text>
</comment>
<protein>
    <recommendedName>
        <fullName>Cadherin-7</fullName>
    </recommendedName>
</protein>
<sequence>MKLGKVELCRFLQLIALFLCFSGMNQAELPRSRSKPYFQLGRSRTKRSWVWNQFFVLEEYMGSDPLYVGKLHSDVDKGDGFIKYILSGEGASSIFIIDENTGDIHATKRLDREEQAYYTLRAQALDRLTNKPVEPESEFVIKIQDINDNEPKFLDGPYTAGVPEMSPVGTSVVQVTATDADDPTYGNSARVVYSILQGQPYFSVEPKTGVIKTALPNMDREAKDQYLLVIQAKDMVGQNGGLSGTTSVTVTLTDVNDNPPRFPRRSYQYNGPESLPVASVVARIKAADADIGVNAEMEYKIVDGDGLGIFKISPDKDTQEGIITIQKELDFEAKTSYTLRIEAANRDADPRFLSLGPFSDTTTVKIIVEDVDEPPVFSSPLYPMEVSEATQVGHIIGTVAAHDPDSSNSPVRYSIDRNTDLERYFNIDANSGIITTAKSLDRETNPVHNITVLAMESQNPSQVGRGYVAITILDINDNAPEFAMDYETTVCENAQPGQVIQKISAIDKDEPSNGHQFYFSLTTDMANNLNSSLKDNKDNTASILTRRNGFRRQEQSVYYLPIFIVDNGSPSLSSTNTLTIRVCDCDADGIAQTCNAEAYILPAGLSTGALIAILACVLTLLVLILLIVTMKRRKKEPLIFDEERDIRENIVRYDDEGGGEEDTEAFDMAALRNLNVVRDTKTRRDVTPEIQFLSRPTFKNIPDNVIFREFIWERLKEADVDPGAPPYDSLQTYAFEGNGSVAESLGSLDSNSSNSDQNYDYLSDWGPRFKRLAEMYGNGQESLYS</sequence>
<dbReference type="EMBL" id="AB121031">
    <property type="protein sequence ID" value="BAD90595.1"/>
    <property type="molecule type" value="mRNA"/>
</dbReference>
<dbReference type="RefSeq" id="NP_001012755.1">
    <property type="nucleotide sequence ID" value="NM_001012737.1"/>
</dbReference>
<dbReference type="SMR" id="Q5DWV2"/>
<dbReference type="FunCoup" id="Q5DWV2">
    <property type="interactions" value="912"/>
</dbReference>
<dbReference type="STRING" id="10116.ENSRNOP00000049491"/>
<dbReference type="GlyCosmos" id="Q5DWV2">
    <property type="glycosylation" value="2 sites, No reported glycans"/>
</dbReference>
<dbReference type="GlyGen" id="Q5DWV2">
    <property type="glycosylation" value="2 sites"/>
</dbReference>
<dbReference type="PhosphoSitePlus" id="Q5DWV2"/>
<dbReference type="PaxDb" id="10116-ENSRNOP00000049491"/>
<dbReference type="GeneID" id="29162"/>
<dbReference type="KEGG" id="rno:29162"/>
<dbReference type="UCSC" id="RGD:1306856">
    <property type="organism name" value="rat"/>
</dbReference>
<dbReference type="AGR" id="RGD:1306856"/>
<dbReference type="CTD" id="1005"/>
<dbReference type="RGD" id="1306856">
    <property type="gene designation" value="Cdh7"/>
</dbReference>
<dbReference type="eggNOG" id="KOG3594">
    <property type="taxonomic scope" value="Eukaryota"/>
</dbReference>
<dbReference type="InParanoid" id="Q5DWV2"/>
<dbReference type="PhylomeDB" id="Q5DWV2"/>
<dbReference type="Reactome" id="R-RNO-418990">
    <property type="pathway name" value="Adherens junctions interactions"/>
</dbReference>
<dbReference type="PRO" id="PR:Q5DWV2"/>
<dbReference type="Proteomes" id="UP000002494">
    <property type="component" value="Unplaced"/>
</dbReference>
<dbReference type="GO" id="GO:0005912">
    <property type="term" value="C:adherens junction"/>
    <property type="evidence" value="ECO:0000318"/>
    <property type="project" value="GO_Central"/>
</dbReference>
<dbReference type="GO" id="GO:0016342">
    <property type="term" value="C:catenin complex"/>
    <property type="evidence" value="ECO:0000318"/>
    <property type="project" value="GO_Central"/>
</dbReference>
<dbReference type="GO" id="GO:0008013">
    <property type="term" value="F:beta-catenin binding"/>
    <property type="evidence" value="ECO:0000318"/>
    <property type="project" value="GO_Central"/>
</dbReference>
<dbReference type="GO" id="GO:0045296">
    <property type="term" value="F:cadherin binding"/>
    <property type="evidence" value="ECO:0000318"/>
    <property type="project" value="GO_Central"/>
</dbReference>
<dbReference type="GO" id="GO:0005509">
    <property type="term" value="F:calcium ion binding"/>
    <property type="evidence" value="ECO:0007669"/>
    <property type="project" value="InterPro"/>
</dbReference>
<dbReference type="GO" id="GO:0034332">
    <property type="term" value="P:adherens junction organization"/>
    <property type="evidence" value="ECO:0000318"/>
    <property type="project" value="GO_Central"/>
</dbReference>
<dbReference type="GO" id="GO:0016339">
    <property type="term" value="P:calcium-dependent cell-cell adhesion via plasma membrane cell adhesion molecules"/>
    <property type="evidence" value="ECO:0000318"/>
    <property type="project" value="GO_Central"/>
</dbReference>
<dbReference type="GO" id="GO:0016477">
    <property type="term" value="P:cell migration"/>
    <property type="evidence" value="ECO:0000318"/>
    <property type="project" value="GO_Central"/>
</dbReference>
<dbReference type="GO" id="GO:0000902">
    <property type="term" value="P:cell morphogenesis"/>
    <property type="evidence" value="ECO:0000318"/>
    <property type="project" value="GO_Central"/>
</dbReference>
<dbReference type="GO" id="GO:0044331">
    <property type="term" value="P:cell-cell adhesion mediated by cadherin"/>
    <property type="evidence" value="ECO:0000318"/>
    <property type="project" value="GO_Central"/>
</dbReference>
<dbReference type="GO" id="GO:0007043">
    <property type="term" value="P:cell-cell junction assembly"/>
    <property type="evidence" value="ECO:0000318"/>
    <property type="project" value="GO_Central"/>
</dbReference>
<dbReference type="GO" id="GO:0007156">
    <property type="term" value="P:homophilic cell adhesion via plasma membrane adhesion molecules"/>
    <property type="evidence" value="ECO:0007669"/>
    <property type="project" value="InterPro"/>
</dbReference>
<dbReference type="CDD" id="cd11304">
    <property type="entry name" value="Cadherin_repeat"/>
    <property type="match status" value="5"/>
</dbReference>
<dbReference type="FunFam" id="4.10.900.10:FF:000001">
    <property type="entry name" value="Cadherin 2"/>
    <property type="match status" value="1"/>
</dbReference>
<dbReference type="FunFam" id="2.60.40.60:FF:000008">
    <property type="entry name" value="Cadherin 24"/>
    <property type="match status" value="1"/>
</dbReference>
<dbReference type="FunFam" id="2.60.40.60:FF:000009">
    <property type="entry name" value="Cadherin 24"/>
    <property type="match status" value="1"/>
</dbReference>
<dbReference type="FunFam" id="2.60.40.60:FF:000012">
    <property type="entry name" value="Cadherin 24"/>
    <property type="match status" value="1"/>
</dbReference>
<dbReference type="FunFam" id="2.60.40.60:FF:000017">
    <property type="entry name" value="Cadherin 24"/>
    <property type="match status" value="1"/>
</dbReference>
<dbReference type="FunFam" id="2.60.40.60:FF:000014">
    <property type="entry name" value="Cadherin 8"/>
    <property type="match status" value="1"/>
</dbReference>
<dbReference type="Gene3D" id="2.60.40.60">
    <property type="entry name" value="Cadherins"/>
    <property type="match status" value="5"/>
</dbReference>
<dbReference type="Gene3D" id="4.10.900.10">
    <property type="entry name" value="TCF3-CBD (Catenin binding domain)"/>
    <property type="match status" value="1"/>
</dbReference>
<dbReference type="InterPro" id="IPR039808">
    <property type="entry name" value="Cadherin"/>
</dbReference>
<dbReference type="InterPro" id="IPR002126">
    <property type="entry name" value="Cadherin-like_dom"/>
</dbReference>
<dbReference type="InterPro" id="IPR015919">
    <property type="entry name" value="Cadherin-like_sf"/>
</dbReference>
<dbReference type="InterPro" id="IPR020894">
    <property type="entry name" value="Cadherin_CS"/>
</dbReference>
<dbReference type="InterPro" id="IPR000233">
    <property type="entry name" value="Cadherin_Y-type_LIR"/>
</dbReference>
<dbReference type="InterPro" id="IPR027397">
    <property type="entry name" value="Catenin-bd_sf"/>
</dbReference>
<dbReference type="PANTHER" id="PTHR24027">
    <property type="entry name" value="CADHERIN-23"/>
    <property type="match status" value="1"/>
</dbReference>
<dbReference type="PANTHER" id="PTHR24027:SF91">
    <property type="entry name" value="CADHERIN-7"/>
    <property type="match status" value="1"/>
</dbReference>
<dbReference type="Pfam" id="PF01049">
    <property type="entry name" value="CADH_Y-type_LIR"/>
    <property type="match status" value="1"/>
</dbReference>
<dbReference type="Pfam" id="PF00028">
    <property type="entry name" value="Cadherin"/>
    <property type="match status" value="5"/>
</dbReference>
<dbReference type="PRINTS" id="PR00205">
    <property type="entry name" value="CADHERIN"/>
</dbReference>
<dbReference type="SMART" id="SM00112">
    <property type="entry name" value="CA"/>
    <property type="match status" value="5"/>
</dbReference>
<dbReference type="SUPFAM" id="SSF49313">
    <property type="entry name" value="Cadherin-like"/>
    <property type="match status" value="5"/>
</dbReference>
<dbReference type="PROSITE" id="PS00232">
    <property type="entry name" value="CADHERIN_1"/>
    <property type="match status" value="3"/>
</dbReference>
<dbReference type="PROSITE" id="PS50268">
    <property type="entry name" value="CADHERIN_2"/>
    <property type="match status" value="5"/>
</dbReference>
<proteinExistence type="evidence at transcript level"/>
<accession>Q5DWV2</accession>
<name>CADH7_RAT</name>
<evidence type="ECO:0000250" key="1"/>
<evidence type="ECO:0000255" key="2"/>
<evidence type="ECO:0000255" key="3">
    <source>
        <dbReference type="PROSITE-ProRule" id="PRU00043"/>
    </source>
</evidence>
<feature type="signal peptide" evidence="2">
    <location>
        <begin position="1"/>
        <end position="27"/>
    </location>
</feature>
<feature type="propeptide" id="PRO_0000320092" evidence="2">
    <location>
        <begin position="28"/>
        <end position="47"/>
    </location>
</feature>
<feature type="chain" id="PRO_0000320093" description="Cadherin-7">
    <location>
        <begin position="48"/>
        <end position="785"/>
    </location>
</feature>
<feature type="topological domain" description="Extracellular" evidence="2">
    <location>
        <begin position="28"/>
        <end position="607"/>
    </location>
</feature>
<feature type="transmembrane region" description="Helical" evidence="2">
    <location>
        <begin position="608"/>
        <end position="628"/>
    </location>
</feature>
<feature type="topological domain" description="Cytoplasmic" evidence="2">
    <location>
        <begin position="629"/>
        <end position="785"/>
    </location>
</feature>
<feature type="domain" description="Cadherin 1" evidence="3">
    <location>
        <begin position="49"/>
        <end position="153"/>
    </location>
</feature>
<feature type="domain" description="Cadherin 2" evidence="3">
    <location>
        <begin position="154"/>
        <end position="262"/>
    </location>
</feature>
<feature type="domain" description="Cadherin 3" evidence="3">
    <location>
        <begin position="263"/>
        <end position="377"/>
    </location>
</feature>
<feature type="domain" description="Cadherin 4" evidence="3">
    <location>
        <begin position="378"/>
        <end position="482"/>
    </location>
</feature>
<feature type="domain" description="Cadherin 5" evidence="3">
    <location>
        <begin position="482"/>
        <end position="599"/>
    </location>
</feature>
<feature type="glycosylation site" description="N-linked (GlcNAc...) asparagine" evidence="2">
    <location>
        <position position="449"/>
    </location>
</feature>
<feature type="glycosylation site" description="N-linked (GlcNAc...) asparagine" evidence="2">
    <location>
        <position position="530"/>
    </location>
</feature>